<keyword id="KW-1185">Reference proteome</keyword>
<dbReference type="EMBL" id="AY596297">
    <property type="protein sequence ID" value="AAV45475.1"/>
    <property type="molecule type" value="Genomic_DNA"/>
</dbReference>
<dbReference type="RefSeq" id="WP_004515717.1">
    <property type="nucleotide sequence ID" value="NZ_CP039138.1"/>
</dbReference>
<dbReference type="STRING" id="272569.rrnAC0441"/>
<dbReference type="PaxDb" id="272569-rrnAC0441"/>
<dbReference type="EnsemblBacteria" id="AAV45475">
    <property type="protein sequence ID" value="AAV45475"/>
    <property type="gene ID" value="rrnAC0441"/>
</dbReference>
<dbReference type="KEGG" id="hma:rrnAC0441"/>
<dbReference type="PATRIC" id="fig|272569.17.peg.1217"/>
<dbReference type="eggNOG" id="arCOG02119">
    <property type="taxonomic scope" value="Archaea"/>
</dbReference>
<dbReference type="HOGENOM" id="CLU_138334_0_0_2"/>
<dbReference type="Proteomes" id="UP000001169">
    <property type="component" value="Chromosome I"/>
</dbReference>
<dbReference type="HAMAP" id="MF_01223">
    <property type="entry name" value="UPF0212"/>
    <property type="match status" value="1"/>
</dbReference>
<dbReference type="InterPro" id="IPR007564">
    <property type="entry name" value="UPF0212"/>
</dbReference>
<dbReference type="NCBIfam" id="NF003035">
    <property type="entry name" value="PRK03922.1"/>
    <property type="match status" value="1"/>
</dbReference>
<dbReference type="PANTHER" id="PTHR42199">
    <property type="entry name" value="UPF0212 PROTEIN MJ0068"/>
    <property type="match status" value="1"/>
</dbReference>
<dbReference type="PANTHER" id="PTHR42199:SF1">
    <property type="entry name" value="UPF0212 PROTEIN TK1194"/>
    <property type="match status" value="1"/>
</dbReference>
<dbReference type="Pfam" id="PF04475">
    <property type="entry name" value="DUF555"/>
    <property type="match status" value="1"/>
</dbReference>
<dbReference type="PIRSF" id="PIRSF016934">
    <property type="entry name" value="UCP016934"/>
    <property type="match status" value="1"/>
</dbReference>
<protein>
    <recommendedName>
        <fullName evidence="1">UPF0212 protein rrnAC0441</fullName>
    </recommendedName>
</protein>
<evidence type="ECO:0000255" key="1">
    <source>
        <dbReference type="HAMAP-Rule" id="MF_01223"/>
    </source>
</evidence>
<reference key="1">
    <citation type="journal article" date="2004" name="Genome Res.">
        <title>Genome sequence of Haloarcula marismortui: a halophilic archaeon from the Dead Sea.</title>
        <authorList>
            <person name="Baliga N.S."/>
            <person name="Bonneau R."/>
            <person name="Facciotti M.T."/>
            <person name="Pan M."/>
            <person name="Glusman G."/>
            <person name="Deutsch E.W."/>
            <person name="Shannon P."/>
            <person name="Chiu Y."/>
            <person name="Weng R.S."/>
            <person name="Gan R.R."/>
            <person name="Hung P."/>
            <person name="Date S.V."/>
            <person name="Marcotte E."/>
            <person name="Hood L."/>
            <person name="Ng W.V."/>
        </authorList>
    </citation>
    <scope>NUCLEOTIDE SEQUENCE [LARGE SCALE GENOMIC DNA]</scope>
    <source>
        <strain>ATCC 43049 / DSM 3752 / JCM 8966 / VKM B-1809</strain>
    </source>
</reference>
<name>Y441_HALMA</name>
<gene>
    <name type="ordered locus">rrnAC0441</name>
</gene>
<organism>
    <name type="scientific">Haloarcula marismortui (strain ATCC 43049 / DSM 3752 / JCM 8966 / VKM B-1809)</name>
    <name type="common">Halobacterium marismortui</name>
    <dbReference type="NCBI Taxonomy" id="272569"/>
    <lineage>
        <taxon>Archaea</taxon>
        <taxon>Methanobacteriati</taxon>
        <taxon>Methanobacteriota</taxon>
        <taxon>Stenosarchaea group</taxon>
        <taxon>Halobacteria</taxon>
        <taxon>Halobacteriales</taxon>
        <taxon>Haloarculaceae</taxon>
        <taxon>Haloarcula</taxon>
    </lineage>
</organism>
<proteinExistence type="inferred from homology"/>
<feature type="chain" id="PRO_0000068271" description="UPF0212 protein rrnAC0441">
    <location>
        <begin position="1"/>
        <end position="123"/>
    </location>
</feature>
<sequence>MNYLVAMEAAWLVRDVDDIDDAIGVAVSEAGKRLNEAEMDYVEVEVGATGCPACGEPFDSAFIAADTALVGLVLEMDVFNAESPEHAQRIAKSEIGGALRDVPLKVVEVFETEADEDEAEAEA</sequence>
<accession>Q5V4S7</accession>
<comment type="similarity">
    <text evidence="1">Belongs to the UPF0212 family.</text>
</comment>